<evidence type="ECO:0000255" key="1">
    <source>
        <dbReference type="HAMAP-Rule" id="MF_00071"/>
    </source>
</evidence>
<organism>
    <name type="scientific">Limosilactobacillus fermentum (strain NBRC 3956 / LMG 18251)</name>
    <name type="common">Lactobacillus fermentum</name>
    <dbReference type="NCBI Taxonomy" id="334390"/>
    <lineage>
        <taxon>Bacteria</taxon>
        <taxon>Bacillati</taxon>
        <taxon>Bacillota</taxon>
        <taxon>Bacilli</taxon>
        <taxon>Lactobacillales</taxon>
        <taxon>Lactobacillaceae</taxon>
        <taxon>Limosilactobacillus</taxon>
    </lineage>
</organism>
<comment type="function">
    <text evidence="1">Required for accurate and efficient protein synthesis under certain stress conditions. May act as a fidelity factor of the translation reaction, by catalyzing a one-codon backward translocation of tRNAs on improperly translocated ribosomes. Back-translocation proceeds from a post-translocation (POST) complex to a pre-translocation (PRE) complex, thus giving elongation factor G a second chance to translocate the tRNAs correctly. Binds to ribosomes in a GTP-dependent manner.</text>
</comment>
<comment type="catalytic activity">
    <reaction evidence="1">
        <text>GTP + H2O = GDP + phosphate + H(+)</text>
        <dbReference type="Rhea" id="RHEA:19669"/>
        <dbReference type="ChEBI" id="CHEBI:15377"/>
        <dbReference type="ChEBI" id="CHEBI:15378"/>
        <dbReference type="ChEBI" id="CHEBI:37565"/>
        <dbReference type="ChEBI" id="CHEBI:43474"/>
        <dbReference type="ChEBI" id="CHEBI:58189"/>
        <dbReference type="EC" id="3.6.5.n1"/>
    </reaction>
</comment>
<comment type="subcellular location">
    <subcellularLocation>
        <location evidence="1">Cell membrane</location>
        <topology evidence="1">Peripheral membrane protein</topology>
        <orientation evidence="1">Cytoplasmic side</orientation>
    </subcellularLocation>
</comment>
<comment type="similarity">
    <text evidence="1">Belongs to the TRAFAC class translation factor GTPase superfamily. Classic translation factor GTPase family. LepA subfamily.</text>
</comment>
<dbReference type="EC" id="3.6.5.n1" evidence="1"/>
<dbReference type="EMBL" id="AP008937">
    <property type="protein sequence ID" value="BAG27101.1"/>
    <property type="molecule type" value="Genomic_DNA"/>
</dbReference>
<dbReference type="RefSeq" id="WP_012391120.1">
    <property type="nucleotide sequence ID" value="NC_010610.1"/>
</dbReference>
<dbReference type="SMR" id="B2GBR9"/>
<dbReference type="KEGG" id="lfe:LAF_0765"/>
<dbReference type="PATRIC" id="fig|334390.5.peg.837"/>
<dbReference type="eggNOG" id="COG0481">
    <property type="taxonomic scope" value="Bacteria"/>
</dbReference>
<dbReference type="HOGENOM" id="CLU_009995_3_3_9"/>
<dbReference type="Proteomes" id="UP000001697">
    <property type="component" value="Chromosome"/>
</dbReference>
<dbReference type="GO" id="GO:0005886">
    <property type="term" value="C:plasma membrane"/>
    <property type="evidence" value="ECO:0007669"/>
    <property type="project" value="UniProtKB-SubCell"/>
</dbReference>
<dbReference type="GO" id="GO:0005525">
    <property type="term" value="F:GTP binding"/>
    <property type="evidence" value="ECO:0007669"/>
    <property type="project" value="UniProtKB-UniRule"/>
</dbReference>
<dbReference type="GO" id="GO:0003924">
    <property type="term" value="F:GTPase activity"/>
    <property type="evidence" value="ECO:0007669"/>
    <property type="project" value="UniProtKB-UniRule"/>
</dbReference>
<dbReference type="GO" id="GO:0043022">
    <property type="term" value="F:ribosome binding"/>
    <property type="evidence" value="ECO:0007669"/>
    <property type="project" value="UniProtKB-UniRule"/>
</dbReference>
<dbReference type="GO" id="GO:0003746">
    <property type="term" value="F:translation elongation factor activity"/>
    <property type="evidence" value="ECO:0007669"/>
    <property type="project" value="UniProtKB-UniRule"/>
</dbReference>
<dbReference type="GO" id="GO:0045727">
    <property type="term" value="P:positive regulation of translation"/>
    <property type="evidence" value="ECO:0007669"/>
    <property type="project" value="UniProtKB-UniRule"/>
</dbReference>
<dbReference type="CDD" id="cd03699">
    <property type="entry name" value="EF4_II"/>
    <property type="match status" value="1"/>
</dbReference>
<dbReference type="CDD" id="cd16260">
    <property type="entry name" value="EF4_III"/>
    <property type="match status" value="1"/>
</dbReference>
<dbReference type="CDD" id="cd01890">
    <property type="entry name" value="LepA"/>
    <property type="match status" value="1"/>
</dbReference>
<dbReference type="CDD" id="cd03709">
    <property type="entry name" value="lepA_C"/>
    <property type="match status" value="1"/>
</dbReference>
<dbReference type="FunFam" id="3.40.50.300:FF:000078">
    <property type="entry name" value="Elongation factor 4"/>
    <property type="match status" value="1"/>
</dbReference>
<dbReference type="FunFam" id="2.40.30.10:FF:000015">
    <property type="entry name" value="Translation factor GUF1, mitochondrial"/>
    <property type="match status" value="1"/>
</dbReference>
<dbReference type="FunFam" id="3.30.70.240:FF:000007">
    <property type="entry name" value="Translation factor GUF1, mitochondrial"/>
    <property type="match status" value="1"/>
</dbReference>
<dbReference type="FunFam" id="3.30.70.2570:FF:000001">
    <property type="entry name" value="Translation factor GUF1, mitochondrial"/>
    <property type="match status" value="1"/>
</dbReference>
<dbReference type="FunFam" id="3.30.70.870:FF:000004">
    <property type="entry name" value="Translation factor GUF1, mitochondrial"/>
    <property type="match status" value="1"/>
</dbReference>
<dbReference type="Gene3D" id="3.30.70.240">
    <property type="match status" value="1"/>
</dbReference>
<dbReference type="Gene3D" id="3.30.70.2570">
    <property type="entry name" value="Elongation factor 4, C-terminal domain"/>
    <property type="match status" value="1"/>
</dbReference>
<dbReference type="Gene3D" id="3.30.70.870">
    <property type="entry name" value="Elongation Factor G (Translational Gtpase), domain 3"/>
    <property type="match status" value="1"/>
</dbReference>
<dbReference type="Gene3D" id="3.40.50.300">
    <property type="entry name" value="P-loop containing nucleotide triphosphate hydrolases"/>
    <property type="match status" value="1"/>
</dbReference>
<dbReference type="Gene3D" id="2.40.30.10">
    <property type="entry name" value="Translation factors"/>
    <property type="match status" value="1"/>
</dbReference>
<dbReference type="HAMAP" id="MF_00071">
    <property type="entry name" value="LepA"/>
    <property type="match status" value="1"/>
</dbReference>
<dbReference type="InterPro" id="IPR006297">
    <property type="entry name" value="EF-4"/>
</dbReference>
<dbReference type="InterPro" id="IPR035647">
    <property type="entry name" value="EFG_III/V"/>
</dbReference>
<dbReference type="InterPro" id="IPR000640">
    <property type="entry name" value="EFG_V-like"/>
</dbReference>
<dbReference type="InterPro" id="IPR004161">
    <property type="entry name" value="EFTu-like_2"/>
</dbReference>
<dbReference type="InterPro" id="IPR038363">
    <property type="entry name" value="LepA_C_sf"/>
</dbReference>
<dbReference type="InterPro" id="IPR013842">
    <property type="entry name" value="LepA_CTD"/>
</dbReference>
<dbReference type="InterPro" id="IPR035654">
    <property type="entry name" value="LepA_IV"/>
</dbReference>
<dbReference type="InterPro" id="IPR027417">
    <property type="entry name" value="P-loop_NTPase"/>
</dbReference>
<dbReference type="InterPro" id="IPR005225">
    <property type="entry name" value="Small_GTP-bd"/>
</dbReference>
<dbReference type="InterPro" id="IPR000795">
    <property type="entry name" value="T_Tr_GTP-bd_dom"/>
</dbReference>
<dbReference type="NCBIfam" id="TIGR01393">
    <property type="entry name" value="lepA"/>
    <property type="match status" value="1"/>
</dbReference>
<dbReference type="NCBIfam" id="TIGR00231">
    <property type="entry name" value="small_GTP"/>
    <property type="match status" value="1"/>
</dbReference>
<dbReference type="PANTHER" id="PTHR43512:SF4">
    <property type="entry name" value="TRANSLATION FACTOR GUF1 HOMOLOG, CHLOROPLASTIC"/>
    <property type="match status" value="1"/>
</dbReference>
<dbReference type="PANTHER" id="PTHR43512">
    <property type="entry name" value="TRANSLATION FACTOR GUF1-RELATED"/>
    <property type="match status" value="1"/>
</dbReference>
<dbReference type="Pfam" id="PF00679">
    <property type="entry name" value="EFG_C"/>
    <property type="match status" value="1"/>
</dbReference>
<dbReference type="Pfam" id="PF00009">
    <property type="entry name" value="GTP_EFTU"/>
    <property type="match status" value="1"/>
</dbReference>
<dbReference type="Pfam" id="PF03144">
    <property type="entry name" value="GTP_EFTU_D2"/>
    <property type="match status" value="1"/>
</dbReference>
<dbReference type="Pfam" id="PF06421">
    <property type="entry name" value="LepA_C"/>
    <property type="match status" value="1"/>
</dbReference>
<dbReference type="PRINTS" id="PR00315">
    <property type="entry name" value="ELONGATNFCT"/>
</dbReference>
<dbReference type="SMART" id="SM00838">
    <property type="entry name" value="EFG_C"/>
    <property type="match status" value="1"/>
</dbReference>
<dbReference type="SUPFAM" id="SSF54980">
    <property type="entry name" value="EF-G C-terminal domain-like"/>
    <property type="match status" value="2"/>
</dbReference>
<dbReference type="SUPFAM" id="SSF52540">
    <property type="entry name" value="P-loop containing nucleoside triphosphate hydrolases"/>
    <property type="match status" value="1"/>
</dbReference>
<dbReference type="PROSITE" id="PS51722">
    <property type="entry name" value="G_TR_2"/>
    <property type="match status" value="1"/>
</dbReference>
<name>LEPA_LIMF3</name>
<protein>
    <recommendedName>
        <fullName evidence="1">Elongation factor 4</fullName>
        <shortName evidence="1">EF-4</shortName>
        <ecNumber evidence="1">3.6.5.n1</ecNumber>
    </recommendedName>
    <alternativeName>
        <fullName evidence="1">Ribosomal back-translocase LepA</fullName>
    </alternativeName>
</protein>
<gene>
    <name evidence="1" type="primary">lepA</name>
    <name type="ordered locus">LAF_0765</name>
</gene>
<proteinExistence type="inferred from homology"/>
<sequence>MDLAAMKERQQRIRNFSIVAHIDHGKSTLADRILEMTDTISKREMKNQILDDMPLERERGITIKLNAVALTYHAQDGQDYIFHLIDTPGHVDFSYEVSRSLAACEGAILVVDATQGVEAQTLANTYLAIDNDLEILPVINKVDLPSADPEGTKKQIEDEIGLDTDEAVDISAKTGVNVDQVLEKIVQDIPAPTGDLEAPLKALIFDSKYDDYRGVVLSVRVKEGTVKKGDKIEFMNSKAVYEVAEVGINSPKPLARDFLMAGDVGYVTAAIKDIKDARVGDTITDANHPTDKPLAGYRQMQPMVYAGLYPTDNAKFNDLRDALEKLQLNDAALTFEPESSQALGFGFRCGFLGMLHMDVIQERLEREFDLDLITTAPSVTYHVNLHDGSTRNVENPAEMPDVTEIKSIEEPFVKASIMVPNDYVGAVMELCQRKRGQFDTMEYLSDTRVNVIYHIPLSEIIYDFFDRLKSSTRGYASLDYEIDDYRPSDLVKIDILLNGDRVDALSFISHRDFAEERGREIASKLKKIIPRQNFEIPVQAAIGSKIIARTNIKAYRKDVTARIHTGDPDRRAKLLDKQKRGKKRMKAVGKVEVPQAAFMAVLQTDEEIDN</sequence>
<feature type="chain" id="PRO_1000092412" description="Elongation factor 4">
    <location>
        <begin position="1"/>
        <end position="610"/>
    </location>
</feature>
<feature type="domain" description="tr-type G">
    <location>
        <begin position="11"/>
        <end position="193"/>
    </location>
</feature>
<feature type="binding site" evidence="1">
    <location>
        <begin position="23"/>
        <end position="28"/>
    </location>
    <ligand>
        <name>GTP</name>
        <dbReference type="ChEBI" id="CHEBI:37565"/>
    </ligand>
</feature>
<feature type="binding site" evidence="1">
    <location>
        <begin position="140"/>
        <end position="143"/>
    </location>
    <ligand>
        <name>GTP</name>
        <dbReference type="ChEBI" id="CHEBI:37565"/>
    </ligand>
</feature>
<keyword id="KW-1003">Cell membrane</keyword>
<keyword id="KW-0342">GTP-binding</keyword>
<keyword id="KW-0378">Hydrolase</keyword>
<keyword id="KW-0472">Membrane</keyword>
<keyword id="KW-0547">Nucleotide-binding</keyword>
<keyword id="KW-0648">Protein biosynthesis</keyword>
<keyword id="KW-1185">Reference proteome</keyword>
<reference key="1">
    <citation type="journal article" date="2008" name="DNA Res.">
        <title>Comparative genome analysis of Lactobacillus reuteri and Lactobacillus fermentum reveal a genomic island for reuterin and cobalamin production.</title>
        <authorList>
            <person name="Morita H."/>
            <person name="Toh H."/>
            <person name="Fukuda S."/>
            <person name="Horikawa H."/>
            <person name="Oshima K."/>
            <person name="Suzuki T."/>
            <person name="Murakami M."/>
            <person name="Hisamatsu S."/>
            <person name="Kato Y."/>
            <person name="Takizawa T."/>
            <person name="Fukuoka H."/>
            <person name="Yoshimura T."/>
            <person name="Itoh K."/>
            <person name="O'Sullivan D.J."/>
            <person name="McKay L.L."/>
            <person name="Ohno H."/>
            <person name="Kikuchi J."/>
            <person name="Masaoka T."/>
            <person name="Hattori M."/>
        </authorList>
    </citation>
    <scope>NUCLEOTIDE SEQUENCE [LARGE SCALE GENOMIC DNA]</scope>
    <source>
        <strain>NBRC 3956 / LMG 18251</strain>
    </source>
</reference>
<accession>B2GBR9</accession>